<evidence type="ECO:0000255" key="1">
    <source>
        <dbReference type="HAMAP-Rule" id="MF_01363"/>
    </source>
</evidence>
<evidence type="ECO:0000305" key="2"/>
<name>RL21_PSYCK</name>
<accession>Q1Q9X1</accession>
<organism>
    <name type="scientific">Psychrobacter cryohalolentis (strain ATCC BAA-1226 / DSM 17306 / VKM B-2378 / K5)</name>
    <dbReference type="NCBI Taxonomy" id="335284"/>
    <lineage>
        <taxon>Bacteria</taxon>
        <taxon>Pseudomonadati</taxon>
        <taxon>Pseudomonadota</taxon>
        <taxon>Gammaproteobacteria</taxon>
        <taxon>Moraxellales</taxon>
        <taxon>Moraxellaceae</taxon>
        <taxon>Psychrobacter</taxon>
    </lineage>
</organism>
<keyword id="KW-0687">Ribonucleoprotein</keyword>
<keyword id="KW-0689">Ribosomal protein</keyword>
<keyword id="KW-0694">RNA-binding</keyword>
<keyword id="KW-0699">rRNA-binding</keyword>
<reference key="1">
    <citation type="submission" date="2006-03" db="EMBL/GenBank/DDBJ databases">
        <title>Complete sequence of chromosome of Psychrobacter cryohalolentis K5.</title>
        <authorList>
            <consortium name="US DOE Joint Genome Institute"/>
            <person name="Copeland A."/>
            <person name="Lucas S."/>
            <person name="Lapidus A."/>
            <person name="Barry K."/>
            <person name="Detter J.C."/>
            <person name="Glavina T."/>
            <person name="Hammon N."/>
            <person name="Israni S."/>
            <person name="Dalin E."/>
            <person name="Tice H."/>
            <person name="Pitluck S."/>
            <person name="Brettin T."/>
            <person name="Bruce D."/>
            <person name="Han C."/>
            <person name="Tapia R."/>
            <person name="Sims D.R."/>
            <person name="Gilna P."/>
            <person name="Schmutz J."/>
            <person name="Larimer F."/>
            <person name="Land M."/>
            <person name="Hauser L."/>
            <person name="Kyrpides N."/>
            <person name="Kim E."/>
            <person name="Richardson P."/>
        </authorList>
    </citation>
    <scope>NUCLEOTIDE SEQUENCE [LARGE SCALE GENOMIC DNA]</scope>
    <source>
        <strain>ATCC BAA-1226 / DSM 17306 / VKM B-2378 / K5</strain>
    </source>
</reference>
<sequence length="103" mass="11793">MYAVIKTGGKQHRVVVNELLKVELLKAETGETIKFEDVLMIVDGETVKIGQPIVEGASVEVEVVEHGRGEKIRIVKHNRRKHYHKEQGHRQWYTLLKIKAINA</sequence>
<protein>
    <recommendedName>
        <fullName evidence="1">Large ribosomal subunit protein bL21</fullName>
    </recommendedName>
    <alternativeName>
        <fullName evidence="2">50S ribosomal protein L21</fullName>
    </alternativeName>
</protein>
<comment type="function">
    <text evidence="1">This protein binds to 23S rRNA in the presence of protein L20.</text>
</comment>
<comment type="subunit">
    <text evidence="1">Part of the 50S ribosomal subunit. Contacts protein L20.</text>
</comment>
<comment type="similarity">
    <text evidence="1">Belongs to the bacterial ribosomal protein bL21 family.</text>
</comment>
<feature type="chain" id="PRO_0000269367" description="Large ribosomal subunit protein bL21">
    <location>
        <begin position="1"/>
        <end position="103"/>
    </location>
</feature>
<gene>
    <name evidence="1" type="primary">rplU</name>
    <name type="ordered locus">Pcryo_1755</name>
</gene>
<proteinExistence type="inferred from homology"/>
<dbReference type="EMBL" id="CP000323">
    <property type="protein sequence ID" value="ABE75532.1"/>
    <property type="molecule type" value="Genomic_DNA"/>
</dbReference>
<dbReference type="RefSeq" id="WP_011280837.1">
    <property type="nucleotide sequence ID" value="NC_007969.1"/>
</dbReference>
<dbReference type="SMR" id="Q1Q9X1"/>
<dbReference type="STRING" id="335284.Pcryo_1755"/>
<dbReference type="KEGG" id="pcr:Pcryo_1755"/>
<dbReference type="eggNOG" id="COG0261">
    <property type="taxonomic scope" value="Bacteria"/>
</dbReference>
<dbReference type="HOGENOM" id="CLU_061463_3_2_6"/>
<dbReference type="Proteomes" id="UP000002425">
    <property type="component" value="Chromosome"/>
</dbReference>
<dbReference type="GO" id="GO:0005737">
    <property type="term" value="C:cytoplasm"/>
    <property type="evidence" value="ECO:0007669"/>
    <property type="project" value="UniProtKB-ARBA"/>
</dbReference>
<dbReference type="GO" id="GO:1990904">
    <property type="term" value="C:ribonucleoprotein complex"/>
    <property type="evidence" value="ECO:0007669"/>
    <property type="project" value="UniProtKB-KW"/>
</dbReference>
<dbReference type="GO" id="GO:0005840">
    <property type="term" value="C:ribosome"/>
    <property type="evidence" value="ECO:0007669"/>
    <property type="project" value="UniProtKB-KW"/>
</dbReference>
<dbReference type="GO" id="GO:0019843">
    <property type="term" value="F:rRNA binding"/>
    <property type="evidence" value="ECO:0007669"/>
    <property type="project" value="UniProtKB-UniRule"/>
</dbReference>
<dbReference type="GO" id="GO:0003735">
    <property type="term" value="F:structural constituent of ribosome"/>
    <property type="evidence" value="ECO:0007669"/>
    <property type="project" value="InterPro"/>
</dbReference>
<dbReference type="GO" id="GO:0006412">
    <property type="term" value="P:translation"/>
    <property type="evidence" value="ECO:0007669"/>
    <property type="project" value="UniProtKB-UniRule"/>
</dbReference>
<dbReference type="HAMAP" id="MF_01363">
    <property type="entry name" value="Ribosomal_bL21"/>
    <property type="match status" value="1"/>
</dbReference>
<dbReference type="InterPro" id="IPR028909">
    <property type="entry name" value="bL21-like"/>
</dbReference>
<dbReference type="InterPro" id="IPR036164">
    <property type="entry name" value="bL21-like_sf"/>
</dbReference>
<dbReference type="InterPro" id="IPR001787">
    <property type="entry name" value="Ribosomal_bL21"/>
</dbReference>
<dbReference type="InterPro" id="IPR018258">
    <property type="entry name" value="Ribosomal_bL21_CS"/>
</dbReference>
<dbReference type="NCBIfam" id="TIGR00061">
    <property type="entry name" value="L21"/>
    <property type="match status" value="1"/>
</dbReference>
<dbReference type="PANTHER" id="PTHR21349">
    <property type="entry name" value="50S RIBOSOMAL PROTEIN L21"/>
    <property type="match status" value="1"/>
</dbReference>
<dbReference type="PANTHER" id="PTHR21349:SF0">
    <property type="entry name" value="LARGE RIBOSOMAL SUBUNIT PROTEIN BL21M"/>
    <property type="match status" value="1"/>
</dbReference>
<dbReference type="Pfam" id="PF00829">
    <property type="entry name" value="Ribosomal_L21p"/>
    <property type="match status" value="1"/>
</dbReference>
<dbReference type="SUPFAM" id="SSF141091">
    <property type="entry name" value="L21p-like"/>
    <property type="match status" value="1"/>
</dbReference>
<dbReference type="PROSITE" id="PS01169">
    <property type="entry name" value="RIBOSOMAL_L21"/>
    <property type="match status" value="1"/>
</dbReference>